<evidence type="ECO:0000255" key="1">
    <source>
        <dbReference type="HAMAP-Rule" id="MF_00041"/>
    </source>
</evidence>
<protein>
    <recommendedName>
        <fullName evidence="1">Cysteine--tRNA ligase</fullName>
        <ecNumber evidence="1">6.1.1.16</ecNumber>
    </recommendedName>
    <alternativeName>
        <fullName evidence="1">Cysteinyl-tRNA synthetase</fullName>
        <shortName evidence="1">CysRS</shortName>
    </alternativeName>
</protein>
<feature type="chain" id="PRO_0000159501" description="Cysteine--tRNA ligase">
    <location>
        <begin position="1"/>
        <end position="471"/>
    </location>
</feature>
<feature type="short sequence motif" description="'HIGH' region">
    <location>
        <begin position="31"/>
        <end position="41"/>
    </location>
</feature>
<feature type="short sequence motif" description="'KMSKS' region">
    <location>
        <begin position="269"/>
        <end position="273"/>
    </location>
</feature>
<feature type="binding site" evidence="1">
    <location>
        <position position="29"/>
    </location>
    <ligand>
        <name>Zn(2+)</name>
        <dbReference type="ChEBI" id="CHEBI:29105"/>
    </ligand>
</feature>
<feature type="binding site" evidence="1">
    <location>
        <position position="212"/>
    </location>
    <ligand>
        <name>Zn(2+)</name>
        <dbReference type="ChEBI" id="CHEBI:29105"/>
    </ligand>
</feature>
<feature type="binding site" evidence="1">
    <location>
        <position position="237"/>
    </location>
    <ligand>
        <name>Zn(2+)</name>
        <dbReference type="ChEBI" id="CHEBI:29105"/>
    </ligand>
</feature>
<feature type="binding site" evidence="1">
    <location>
        <position position="241"/>
    </location>
    <ligand>
        <name>Zn(2+)</name>
        <dbReference type="ChEBI" id="CHEBI:29105"/>
    </ligand>
</feature>
<feature type="binding site" evidence="1">
    <location>
        <position position="272"/>
    </location>
    <ligand>
        <name>ATP</name>
        <dbReference type="ChEBI" id="CHEBI:30616"/>
    </ligand>
</feature>
<keyword id="KW-0030">Aminoacyl-tRNA synthetase</keyword>
<keyword id="KW-0067">ATP-binding</keyword>
<keyword id="KW-0963">Cytoplasm</keyword>
<keyword id="KW-0436">Ligase</keyword>
<keyword id="KW-0479">Metal-binding</keyword>
<keyword id="KW-0547">Nucleotide-binding</keyword>
<keyword id="KW-0648">Protein biosynthesis</keyword>
<keyword id="KW-1185">Reference proteome</keyword>
<keyword id="KW-0862">Zinc</keyword>
<dbReference type="EC" id="6.1.1.16" evidence="1"/>
<dbReference type="EMBL" id="AP006840">
    <property type="protein sequence ID" value="BAD42101.1"/>
    <property type="molecule type" value="Genomic_DNA"/>
</dbReference>
<dbReference type="SMR" id="Q67JP9"/>
<dbReference type="STRING" id="292459.STH3119"/>
<dbReference type="KEGG" id="sth:STH3119"/>
<dbReference type="eggNOG" id="COG0215">
    <property type="taxonomic scope" value="Bacteria"/>
</dbReference>
<dbReference type="HOGENOM" id="CLU_013528_0_1_9"/>
<dbReference type="OrthoDB" id="9815130at2"/>
<dbReference type="Proteomes" id="UP000000417">
    <property type="component" value="Chromosome"/>
</dbReference>
<dbReference type="GO" id="GO:0005829">
    <property type="term" value="C:cytosol"/>
    <property type="evidence" value="ECO:0007669"/>
    <property type="project" value="TreeGrafter"/>
</dbReference>
<dbReference type="GO" id="GO:0005524">
    <property type="term" value="F:ATP binding"/>
    <property type="evidence" value="ECO:0007669"/>
    <property type="project" value="UniProtKB-UniRule"/>
</dbReference>
<dbReference type="GO" id="GO:0004817">
    <property type="term" value="F:cysteine-tRNA ligase activity"/>
    <property type="evidence" value="ECO:0007669"/>
    <property type="project" value="UniProtKB-UniRule"/>
</dbReference>
<dbReference type="GO" id="GO:0008270">
    <property type="term" value="F:zinc ion binding"/>
    <property type="evidence" value="ECO:0007669"/>
    <property type="project" value="UniProtKB-UniRule"/>
</dbReference>
<dbReference type="GO" id="GO:0006423">
    <property type="term" value="P:cysteinyl-tRNA aminoacylation"/>
    <property type="evidence" value="ECO:0007669"/>
    <property type="project" value="UniProtKB-UniRule"/>
</dbReference>
<dbReference type="CDD" id="cd07963">
    <property type="entry name" value="Anticodon_Ia_Cys"/>
    <property type="match status" value="1"/>
</dbReference>
<dbReference type="CDD" id="cd00672">
    <property type="entry name" value="CysRS_core"/>
    <property type="match status" value="1"/>
</dbReference>
<dbReference type="FunFam" id="3.40.50.620:FF:000009">
    <property type="entry name" value="Cysteine--tRNA ligase"/>
    <property type="match status" value="1"/>
</dbReference>
<dbReference type="Gene3D" id="1.20.120.1910">
    <property type="entry name" value="Cysteine-tRNA ligase, C-terminal anti-codon recognition domain"/>
    <property type="match status" value="1"/>
</dbReference>
<dbReference type="Gene3D" id="3.40.50.620">
    <property type="entry name" value="HUPs"/>
    <property type="match status" value="1"/>
</dbReference>
<dbReference type="HAMAP" id="MF_00041">
    <property type="entry name" value="Cys_tRNA_synth"/>
    <property type="match status" value="1"/>
</dbReference>
<dbReference type="InterPro" id="IPR015803">
    <property type="entry name" value="Cys-tRNA-ligase"/>
</dbReference>
<dbReference type="InterPro" id="IPR015273">
    <property type="entry name" value="Cys-tRNA-synt_Ia_DALR"/>
</dbReference>
<dbReference type="InterPro" id="IPR024909">
    <property type="entry name" value="Cys-tRNA/MSH_ligase"/>
</dbReference>
<dbReference type="InterPro" id="IPR056411">
    <property type="entry name" value="CysS_C"/>
</dbReference>
<dbReference type="InterPro" id="IPR014729">
    <property type="entry name" value="Rossmann-like_a/b/a_fold"/>
</dbReference>
<dbReference type="InterPro" id="IPR032678">
    <property type="entry name" value="tRNA-synt_1_cat_dom"/>
</dbReference>
<dbReference type="InterPro" id="IPR009080">
    <property type="entry name" value="tRNAsynth_Ia_anticodon-bd"/>
</dbReference>
<dbReference type="NCBIfam" id="TIGR00435">
    <property type="entry name" value="cysS"/>
    <property type="match status" value="1"/>
</dbReference>
<dbReference type="PANTHER" id="PTHR10890:SF3">
    <property type="entry name" value="CYSTEINE--TRNA LIGASE, CYTOPLASMIC"/>
    <property type="match status" value="1"/>
</dbReference>
<dbReference type="PANTHER" id="PTHR10890">
    <property type="entry name" value="CYSTEINYL-TRNA SYNTHETASE"/>
    <property type="match status" value="1"/>
</dbReference>
<dbReference type="Pfam" id="PF23493">
    <property type="entry name" value="CysS_C"/>
    <property type="match status" value="1"/>
</dbReference>
<dbReference type="Pfam" id="PF09190">
    <property type="entry name" value="DALR_2"/>
    <property type="match status" value="1"/>
</dbReference>
<dbReference type="Pfam" id="PF01406">
    <property type="entry name" value="tRNA-synt_1e"/>
    <property type="match status" value="1"/>
</dbReference>
<dbReference type="PRINTS" id="PR00983">
    <property type="entry name" value="TRNASYNTHCYS"/>
</dbReference>
<dbReference type="SMART" id="SM00840">
    <property type="entry name" value="DALR_2"/>
    <property type="match status" value="1"/>
</dbReference>
<dbReference type="SUPFAM" id="SSF47323">
    <property type="entry name" value="Anticodon-binding domain of a subclass of class I aminoacyl-tRNA synthetases"/>
    <property type="match status" value="1"/>
</dbReference>
<dbReference type="SUPFAM" id="SSF52374">
    <property type="entry name" value="Nucleotidylyl transferase"/>
    <property type="match status" value="1"/>
</dbReference>
<sequence length="471" mass="53307">MGIRIYNDLTRKKEDFVPLEPGKVRFYNCGPTVYDYFHIGNARNFVVFDTVRRYLEYRGYQVTFVQNFTDIDDRMIKRARERGITVSELAEEMIQAYFADAGALGVRPADVHPRATALIDEQIAMIQQLIDKGHAYVVEGGDVYFRVTTSPDYGKLSHKNLEELVAGASERVDPDDRKEHPFDFALWKGQKPGEPAWPAPWGPGRPGWHIECSAMARKYLGDTIDIHAGGEDLTFPHHENEIAQSEAVTGKPFARYWMHNAHLMIDGAKMSKSVGNFFTVRDILKRYDGEVVRMFLLSAHYRTQLSFSDQLMEDTRRALERLYNTVANLEHLAKTAPRAEMTAEEQAVLAELSQARERFVAAMDDDFNTAEGLAVIFDLSRELNSRVKPGASAAFAEGGLALLRELAGVLGLLERKAQPQELDAEIEALIAARQEARKARNFAEADRIRDQLRAMGIILEDTPQGVRWRRA</sequence>
<reference key="1">
    <citation type="journal article" date="2004" name="Nucleic Acids Res.">
        <title>Genome sequence of Symbiobacterium thermophilum, an uncultivable bacterium that depends on microbial commensalism.</title>
        <authorList>
            <person name="Ueda K."/>
            <person name="Yamashita A."/>
            <person name="Ishikawa J."/>
            <person name="Shimada M."/>
            <person name="Watsuji T."/>
            <person name="Morimura K."/>
            <person name="Ikeda H."/>
            <person name="Hattori M."/>
            <person name="Beppu T."/>
        </authorList>
    </citation>
    <scope>NUCLEOTIDE SEQUENCE [LARGE SCALE GENOMIC DNA]</scope>
    <source>
        <strain>DSM 24528 / JCM 14929 / IAM 14863 / T</strain>
    </source>
</reference>
<name>SYC_SYMTH</name>
<accession>Q67JP9</accession>
<comment type="catalytic activity">
    <reaction evidence="1">
        <text>tRNA(Cys) + L-cysteine + ATP = L-cysteinyl-tRNA(Cys) + AMP + diphosphate</text>
        <dbReference type="Rhea" id="RHEA:17773"/>
        <dbReference type="Rhea" id="RHEA-COMP:9661"/>
        <dbReference type="Rhea" id="RHEA-COMP:9679"/>
        <dbReference type="ChEBI" id="CHEBI:30616"/>
        <dbReference type="ChEBI" id="CHEBI:33019"/>
        <dbReference type="ChEBI" id="CHEBI:35235"/>
        <dbReference type="ChEBI" id="CHEBI:78442"/>
        <dbReference type="ChEBI" id="CHEBI:78517"/>
        <dbReference type="ChEBI" id="CHEBI:456215"/>
        <dbReference type="EC" id="6.1.1.16"/>
    </reaction>
</comment>
<comment type="cofactor">
    <cofactor evidence="1">
        <name>Zn(2+)</name>
        <dbReference type="ChEBI" id="CHEBI:29105"/>
    </cofactor>
    <text evidence="1">Binds 1 zinc ion per subunit.</text>
</comment>
<comment type="subunit">
    <text evidence="1">Monomer.</text>
</comment>
<comment type="subcellular location">
    <subcellularLocation>
        <location evidence="1">Cytoplasm</location>
    </subcellularLocation>
</comment>
<comment type="similarity">
    <text evidence="1">Belongs to the class-I aminoacyl-tRNA synthetase family.</text>
</comment>
<gene>
    <name evidence="1" type="primary">cysS</name>
    <name type="ordered locus">STH3119</name>
</gene>
<proteinExistence type="inferred from homology"/>
<organism>
    <name type="scientific">Symbiobacterium thermophilum (strain DSM 24528 / JCM 14929 / IAM 14863 / T)</name>
    <dbReference type="NCBI Taxonomy" id="292459"/>
    <lineage>
        <taxon>Bacteria</taxon>
        <taxon>Bacillati</taxon>
        <taxon>Bacillota</taxon>
        <taxon>Clostridia</taxon>
        <taxon>Eubacteriales</taxon>
        <taxon>Symbiobacteriaceae</taxon>
        <taxon>Symbiobacterium</taxon>
    </lineage>
</organism>